<accession>Q2NTH8</accession>
<gene>
    <name evidence="1" type="primary">purT</name>
    <name type="ordered locus">SG1272</name>
</gene>
<feature type="chain" id="PRO_0000319243" description="Formate-dependent phosphoribosylglycinamide formyltransferase">
    <location>
        <begin position="1"/>
        <end position="392"/>
    </location>
</feature>
<feature type="domain" description="ATP-grasp" evidence="1">
    <location>
        <begin position="119"/>
        <end position="308"/>
    </location>
</feature>
<feature type="binding site" evidence="1">
    <location>
        <begin position="22"/>
        <end position="23"/>
    </location>
    <ligand>
        <name>N(1)-(5-phospho-beta-D-ribosyl)glycinamide</name>
        <dbReference type="ChEBI" id="CHEBI:143788"/>
    </ligand>
</feature>
<feature type="binding site" evidence="1">
    <location>
        <position position="82"/>
    </location>
    <ligand>
        <name>N(1)-(5-phospho-beta-D-ribosyl)glycinamide</name>
        <dbReference type="ChEBI" id="CHEBI:143788"/>
    </ligand>
</feature>
<feature type="binding site" evidence="1">
    <location>
        <position position="114"/>
    </location>
    <ligand>
        <name>ATP</name>
        <dbReference type="ChEBI" id="CHEBI:30616"/>
    </ligand>
</feature>
<feature type="binding site" evidence="1">
    <location>
        <position position="155"/>
    </location>
    <ligand>
        <name>ATP</name>
        <dbReference type="ChEBI" id="CHEBI:30616"/>
    </ligand>
</feature>
<feature type="binding site" evidence="1">
    <location>
        <begin position="160"/>
        <end position="165"/>
    </location>
    <ligand>
        <name>ATP</name>
        <dbReference type="ChEBI" id="CHEBI:30616"/>
    </ligand>
</feature>
<feature type="binding site" evidence="1">
    <location>
        <begin position="195"/>
        <end position="198"/>
    </location>
    <ligand>
        <name>ATP</name>
        <dbReference type="ChEBI" id="CHEBI:30616"/>
    </ligand>
</feature>
<feature type="binding site" evidence="1">
    <location>
        <position position="203"/>
    </location>
    <ligand>
        <name>ATP</name>
        <dbReference type="ChEBI" id="CHEBI:30616"/>
    </ligand>
</feature>
<feature type="binding site" evidence="1">
    <location>
        <position position="267"/>
    </location>
    <ligand>
        <name>Mg(2+)</name>
        <dbReference type="ChEBI" id="CHEBI:18420"/>
    </ligand>
</feature>
<feature type="binding site" evidence="1">
    <location>
        <position position="279"/>
    </location>
    <ligand>
        <name>Mg(2+)</name>
        <dbReference type="ChEBI" id="CHEBI:18420"/>
    </ligand>
</feature>
<feature type="binding site" evidence="1">
    <location>
        <position position="286"/>
    </location>
    <ligand>
        <name>N(1)-(5-phospho-beta-D-ribosyl)glycinamide</name>
        <dbReference type="ChEBI" id="CHEBI:143788"/>
    </ligand>
</feature>
<feature type="binding site" evidence="1">
    <location>
        <position position="355"/>
    </location>
    <ligand>
        <name>N(1)-(5-phospho-beta-D-ribosyl)glycinamide</name>
        <dbReference type="ChEBI" id="CHEBI:143788"/>
    </ligand>
</feature>
<feature type="binding site" evidence="1">
    <location>
        <begin position="362"/>
        <end position="363"/>
    </location>
    <ligand>
        <name>N(1)-(5-phospho-beta-D-ribosyl)glycinamide</name>
        <dbReference type="ChEBI" id="CHEBI:143788"/>
    </ligand>
</feature>
<dbReference type="EC" id="6.3.1.21" evidence="1"/>
<dbReference type="EMBL" id="AP008232">
    <property type="protein sequence ID" value="BAE74547.1"/>
    <property type="molecule type" value="Genomic_DNA"/>
</dbReference>
<dbReference type="RefSeq" id="WP_011411101.1">
    <property type="nucleotide sequence ID" value="NC_007712.1"/>
</dbReference>
<dbReference type="SMR" id="Q2NTH8"/>
<dbReference type="STRING" id="343509.SG1272"/>
<dbReference type="KEGG" id="sgl:SG1272"/>
<dbReference type="eggNOG" id="COG0027">
    <property type="taxonomic scope" value="Bacteria"/>
</dbReference>
<dbReference type="HOGENOM" id="CLU_011534_1_3_6"/>
<dbReference type="OrthoDB" id="9804625at2"/>
<dbReference type="BioCyc" id="SGLO343509:SGP1_RS11310-MONOMER"/>
<dbReference type="UniPathway" id="UPA00074">
    <property type="reaction ID" value="UER00127"/>
</dbReference>
<dbReference type="Proteomes" id="UP000001932">
    <property type="component" value="Chromosome"/>
</dbReference>
<dbReference type="GO" id="GO:0005829">
    <property type="term" value="C:cytosol"/>
    <property type="evidence" value="ECO:0007669"/>
    <property type="project" value="TreeGrafter"/>
</dbReference>
<dbReference type="GO" id="GO:0005524">
    <property type="term" value="F:ATP binding"/>
    <property type="evidence" value="ECO:0007669"/>
    <property type="project" value="UniProtKB-UniRule"/>
</dbReference>
<dbReference type="GO" id="GO:0000287">
    <property type="term" value="F:magnesium ion binding"/>
    <property type="evidence" value="ECO:0007669"/>
    <property type="project" value="InterPro"/>
</dbReference>
<dbReference type="GO" id="GO:0043815">
    <property type="term" value="F:phosphoribosylglycinamide formyltransferase 2 activity"/>
    <property type="evidence" value="ECO:0007669"/>
    <property type="project" value="UniProtKB-UniRule"/>
</dbReference>
<dbReference type="GO" id="GO:0004644">
    <property type="term" value="F:phosphoribosylglycinamide formyltransferase activity"/>
    <property type="evidence" value="ECO:0007669"/>
    <property type="project" value="InterPro"/>
</dbReference>
<dbReference type="GO" id="GO:0006189">
    <property type="term" value="P:'de novo' IMP biosynthetic process"/>
    <property type="evidence" value="ECO:0007669"/>
    <property type="project" value="UniProtKB-UniRule"/>
</dbReference>
<dbReference type="FunFam" id="3.30.1490.20:FF:000013">
    <property type="entry name" value="Formate-dependent phosphoribosylglycinamide formyltransferase"/>
    <property type="match status" value="1"/>
</dbReference>
<dbReference type="FunFam" id="3.30.470.20:FF:000027">
    <property type="entry name" value="Formate-dependent phosphoribosylglycinamide formyltransferase"/>
    <property type="match status" value="1"/>
</dbReference>
<dbReference type="FunFam" id="3.40.50.20:FF:000007">
    <property type="entry name" value="Formate-dependent phosphoribosylglycinamide formyltransferase"/>
    <property type="match status" value="1"/>
</dbReference>
<dbReference type="Gene3D" id="3.40.50.20">
    <property type="match status" value="1"/>
</dbReference>
<dbReference type="Gene3D" id="3.30.1490.20">
    <property type="entry name" value="ATP-grasp fold, A domain"/>
    <property type="match status" value="1"/>
</dbReference>
<dbReference type="Gene3D" id="3.30.470.20">
    <property type="entry name" value="ATP-grasp fold, B domain"/>
    <property type="match status" value="1"/>
</dbReference>
<dbReference type="HAMAP" id="MF_01643">
    <property type="entry name" value="PurT"/>
    <property type="match status" value="1"/>
</dbReference>
<dbReference type="InterPro" id="IPR011761">
    <property type="entry name" value="ATP-grasp"/>
</dbReference>
<dbReference type="InterPro" id="IPR003135">
    <property type="entry name" value="ATP-grasp_carboxylate-amine"/>
</dbReference>
<dbReference type="InterPro" id="IPR013815">
    <property type="entry name" value="ATP_grasp_subdomain_1"/>
</dbReference>
<dbReference type="InterPro" id="IPR016185">
    <property type="entry name" value="PreATP-grasp_dom_sf"/>
</dbReference>
<dbReference type="InterPro" id="IPR005862">
    <property type="entry name" value="PurT"/>
</dbReference>
<dbReference type="InterPro" id="IPR054350">
    <property type="entry name" value="PurT/PurK_preATP-grasp"/>
</dbReference>
<dbReference type="InterPro" id="IPR048740">
    <property type="entry name" value="PurT_C"/>
</dbReference>
<dbReference type="InterPro" id="IPR011054">
    <property type="entry name" value="Rudment_hybrid_motif"/>
</dbReference>
<dbReference type="NCBIfam" id="NF006766">
    <property type="entry name" value="PRK09288.1"/>
    <property type="match status" value="1"/>
</dbReference>
<dbReference type="NCBIfam" id="TIGR01142">
    <property type="entry name" value="purT"/>
    <property type="match status" value="1"/>
</dbReference>
<dbReference type="PANTHER" id="PTHR43055">
    <property type="entry name" value="FORMATE-DEPENDENT PHOSPHORIBOSYLGLYCINAMIDE FORMYLTRANSFERASE"/>
    <property type="match status" value="1"/>
</dbReference>
<dbReference type="PANTHER" id="PTHR43055:SF1">
    <property type="entry name" value="FORMATE-DEPENDENT PHOSPHORIBOSYLGLYCINAMIDE FORMYLTRANSFERASE"/>
    <property type="match status" value="1"/>
</dbReference>
<dbReference type="Pfam" id="PF02222">
    <property type="entry name" value="ATP-grasp"/>
    <property type="match status" value="1"/>
</dbReference>
<dbReference type="Pfam" id="PF21244">
    <property type="entry name" value="PurT_C"/>
    <property type="match status" value="1"/>
</dbReference>
<dbReference type="Pfam" id="PF22660">
    <property type="entry name" value="RS_preATP-grasp-like"/>
    <property type="match status" value="1"/>
</dbReference>
<dbReference type="SUPFAM" id="SSF56059">
    <property type="entry name" value="Glutathione synthetase ATP-binding domain-like"/>
    <property type="match status" value="1"/>
</dbReference>
<dbReference type="SUPFAM" id="SSF52440">
    <property type="entry name" value="PreATP-grasp domain"/>
    <property type="match status" value="1"/>
</dbReference>
<dbReference type="SUPFAM" id="SSF51246">
    <property type="entry name" value="Rudiment single hybrid motif"/>
    <property type="match status" value="1"/>
</dbReference>
<dbReference type="PROSITE" id="PS50975">
    <property type="entry name" value="ATP_GRASP"/>
    <property type="match status" value="1"/>
</dbReference>
<protein>
    <recommendedName>
        <fullName evidence="1">Formate-dependent phosphoribosylglycinamide formyltransferase</fullName>
        <ecNumber evidence="1">6.3.1.21</ecNumber>
    </recommendedName>
    <alternativeName>
        <fullName evidence="1">5'-phosphoribosylglycinamide transformylase 2</fullName>
    </alternativeName>
    <alternativeName>
        <fullName evidence="1">Formate-dependent GAR transformylase</fullName>
    </alternativeName>
    <alternativeName>
        <fullName evidence="1">GAR transformylase 2</fullName>
        <shortName evidence="1">GART 2</shortName>
    </alternativeName>
    <alternativeName>
        <fullName evidence="1">Non-folate glycinamide ribonucleotide transformylase</fullName>
    </alternativeName>
    <alternativeName>
        <fullName evidence="1">Phosphoribosylglycinamide formyltransferase 2</fullName>
    </alternativeName>
</protein>
<organism>
    <name type="scientific">Sodalis glossinidius (strain morsitans)</name>
    <dbReference type="NCBI Taxonomy" id="343509"/>
    <lineage>
        <taxon>Bacteria</taxon>
        <taxon>Pseudomonadati</taxon>
        <taxon>Pseudomonadota</taxon>
        <taxon>Gammaproteobacteria</taxon>
        <taxon>Enterobacterales</taxon>
        <taxon>Bruguierivoracaceae</taxon>
        <taxon>Sodalis</taxon>
    </lineage>
</organism>
<sequence length="392" mass="41847">MITIGTALRPAATRVMLLGAGELGKEVAIECQRLGIEVIAVGHYADAPAMHIAHRHHVINMLDGAALRAVIEHERPHFIVPEIEAIATDMLVTLEQEGHHVVPCANATRLTMNREGIRRLAAETLSLPTSRYRFAADRAELDKAVEAIGYPFIIKPVMSSSGKGQSLVRDAAQLDAAWQYAQLGGRAGGGKVIVEGLVAFDFEITLLTINAVDGIHFCAPIGHRQEDGDYRESWQPQHMSALARQRAQTIAADVVTALGGKGLFGVELFICGDDVIFSEVSPRPHDTGMVTLISQDLSEFALHVRAFLGLPIGTIRQYGPAASAVILPELQSDNVSFSGLENALAAGQQIRLFGKPDLSGKRRLGVALAVAATVEEAVTVAKDAAAAVRVTG</sequence>
<reference key="1">
    <citation type="journal article" date="2006" name="Genome Res.">
        <title>Massive genome erosion and functional adaptations provide insights into the symbiotic lifestyle of Sodalis glossinidius in the tsetse host.</title>
        <authorList>
            <person name="Toh H."/>
            <person name="Weiss B.L."/>
            <person name="Perkin S.A.H."/>
            <person name="Yamashita A."/>
            <person name="Oshima K."/>
            <person name="Hattori M."/>
            <person name="Aksoy S."/>
        </authorList>
    </citation>
    <scope>NUCLEOTIDE SEQUENCE [LARGE SCALE GENOMIC DNA]</scope>
    <source>
        <strain>morsitans</strain>
    </source>
</reference>
<comment type="function">
    <text evidence="1">Involved in the de novo purine biosynthesis. Catalyzes the transfer of formate to 5-phospho-ribosyl-glycinamide (GAR), producing 5-phospho-ribosyl-N-formylglycinamide (FGAR). Formate is provided by PurU via hydrolysis of 10-formyl-tetrahydrofolate.</text>
</comment>
<comment type="catalytic activity">
    <reaction evidence="1">
        <text>N(1)-(5-phospho-beta-D-ribosyl)glycinamide + formate + ATP = N(2)-formyl-N(1)-(5-phospho-beta-D-ribosyl)glycinamide + ADP + phosphate + H(+)</text>
        <dbReference type="Rhea" id="RHEA:24829"/>
        <dbReference type="ChEBI" id="CHEBI:15378"/>
        <dbReference type="ChEBI" id="CHEBI:15740"/>
        <dbReference type="ChEBI" id="CHEBI:30616"/>
        <dbReference type="ChEBI" id="CHEBI:43474"/>
        <dbReference type="ChEBI" id="CHEBI:143788"/>
        <dbReference type="ChEBI" id="CHEBI:147286"/>
        <dbReference type="ChEBI" id="CHEBI:456216"/>
        <dbReference type="EC" id="6.3.1.21"/>
    </reaction>
    <physiologicalReaction direction="left-to-right" evidence="1">
        <dbReference type="Rhea" id="RHEA:24830"/>
    </physiologicalReaction>
</comment>
<comment type="pathway">
    <text evidence="1">Purine metabolism; IMP biosynthesis via de novo pathway; N(2)-formyl-N(1)-(5-phospho-D-ribosyl)glycinamide from N(1)-(5-phospho-D-ribosyl)glycinamide (formate route): step 1/1.</text>
</comment>
<comment type="subunit">
    <text evidence="1">Homodimer.</text>
</comment>
<comment type="similarity">
    <text evidence="1">Belongs to the PurK/PurT family.</text>
</comment>
<proteinExistence type="inferred from homology"/>
<keyword id="KW-0067">ATP-binding</keyword>
<keyword id="KW-0436">Ligase</keyword>
<keyword id="KW-0460">Magnesium</keyword>
<keyword id="KW-0479">Metal-binding</keyword>
<keyword id="KW-0547">Nucleotide-binding</keyword>
<keyword id="KW-0658">Purine biosynthesis</keyword>
<evidence type="ECO:0000255" key="1">
    <source>
        <dbReference type="HAMAP-Rule" id="MF_01643"/>
    </source>
</evidence>
<name>PURT_SODGM</name>